<feature type="chain" id="PRO_0000190541" description="4-hydroxy-3-methylbut-2-en-1-yl diphosphate synthase (flavodoxin)">
    <location>
        <begin position="1"/>
        <end position="403"/>
    </location>
</feature>
<feature type="region of interest" description="Disordered" evidence="2">
    <location>
        <begin position="1"/>
        <end position="31"/>
    </location>
</feature>
<feature type="compositionally biased region" description="Basic and acidic residues" evidence="2">
    <location>
        <begin position="1"/>
        <end position="16"/>
    </location>
</feature>
<feature type="binding site" evidence="1">
    <location>
        <position position="291"/>
    </location>
    <ligand>
        <name>[4Fe-4S] cluster</name>
        <dbReference type="ChEBI" id="CHEBI:49883"/>
    </ligand>
</feature>
<feature type="binding site" evidence="1">
    <location>
        <position position="294"/>
    </location>
    <ligand>
        <name>[4Fe-4S] cluster</name>
        <dbReference type="ChEBI" id="CHEBI:49883"/>
    </ligand>
</feature>
<feature type="binding site" evidence="1">
    <location>
        <position position="326"/>
    </location>
    <ligand>
        <name>[4Fe-4S] cluster</name>
        <dbReference type="ChEBI" id="CHEBI:49883"/>
    </ligand>
</feature>
<feature type="binding site" evidence="1">
    <location>
        <position position="333"/>
    </location>
    <ligand>
        <name>[4Fe-4S] cluster</name>
        <dbReference type="ChEBI" id="CHEBI:49883"/>
    </ligand>
</feature>
<comment type="function">
    <text evidence="1">Converts 2C-methyl-D-erythritol 2,4-cyclodiphosphate (ME-2,4cPP) into 1-hydroxy-2-methyl-2-(E)-butenyl 4-diphosphate.</text>
</comment>
<comment type="catalytic activity">
    <reaction evidence="1">
        <text>(2E)-4-hydroxy-3-methylbut-2-enyl diphosphate + oxidized [flavodoxin] + H2O + 2 H(+) = 2-C-methyl-D-erythritol 2,4-cyclic diphosphate + reduced [flavodoxin]</text>
        <dbReference type="Rhea" id="RHEA:43604"/>
        <dbReference type="Rhea" id="RHEA-COMP:10622"/>
        <dbReference type="Rhea" id="RHEA-COMP:10623"/>
        <dbReference type="ChEBI" id="CHEBI:15377"/>
        <dbReference type="ChEBI" id="CHEBI:15378"/>
        <dbReference type="ChEBI" id="CHEBI:57618"/>
        <dbReference type="ChEBI" id="CHEBI:58210"/>
        <dbReference type="ChEBI" id="CHEBI:58483"/>
        <dbReference type="ChEBI" id="CHEBI:128753"/>
        <dbReference type="EC" id="1.17.7.3"/>
    </reaction>
</comment>
<comment type="cofactor">
    <cofactor evidence="1">
        <name>[4Fe-4S] cluster</name>
        <dbReference type="ChEBI" id="CHEBI:49883"/>
    </cofactor>
    <text evidence="1">Binds 1 [4Fe-4S] cluster.</text>
</comment>
<comment type="pathway">
    <text evidence="1">Isoprenoid biosynthesis; isopentenyl diphosphate biosynthesis via DXP pathway; isopentenyl diphosphate from 1-deoxy-D-xylulose 5-phosphate: step 5/6.</text>
</comment>
<comment type="similarity">
    <text evidence="1">Belongs to the IspG family.</text>
</comment>
<name>ISPG_BIFLO</name>
<keyword id="KW-0004">4Fe-4S</keyword>
<keyword id="KW-0408">Iron</keyword>
<keyword id="KW-0411">Iron-sulfur</keyword>
<keyword id="KW-0414">Isoprene biosynthesis</keyword>
<keyword id="KW-0479">Metal-binding</keyword>
<keyword id="KW-0560">Oxidoreductase</keyword>
<keyword id="KW-1185">Reference proteome</keyword>
<gene>
    <name evidence="1" type="primary">ispG</name>
    <name type="ordered locus">BL0098</name>
</gene>
<reference key="1">
    <citation type="journal article" date="2002" name="Proc. Natl. Acad. Sci. U.S.A.">
        <title>The genome sequence of Bifidobacterium longum reflects its adaptation to the human gastrointestinal tract.</title>
        <authorList>
            <person name="Schell M.A."/>
            <person name="Karmirantzou M."/>
            <person name="Snel B."/>
            <person name="Vilanova D."/>
            <person name="Berger B."/>
            <person name="Pessi G."/>
            <person name="Zwahlen M.-C."/>
            <person name="Desiere F."/>
            <person name="Bork P."/>
            <person name="Delley M."/>
            <person name="Pridmore R.D."/>
            <person name="Arigoni F."/>
        </authorList>
    </citation>
    <scope>NUCLEOTIDE SEQUENCE [LARGE SCALE GENOMIC DNA]</scope>
    <source>
        <strain>NCC 2705</strain>
    </source>
</reference>
<proteinExistence type="inferred from homology"/>
<dbReference type="EC" id="1.17.7.3" evidence="1"/>
<dbReference type="EMBL" id="AE014295">
    <property type="protein sequence ID" value="AAN23963.1"/>
    <property type="molecule type" value="Genomic_DNA"/>
</dbReference>
<dbReference type="RefSeq" id="NP_695327.1">
    <property type="nucleotide sequence ID" value="NC_004307.2"/>
</dbReference>
<dbReference type="SMR" id="Q8G7Y6"/>
<dbReference type="STRING" id="206672.BL0098"/>
<dbReference type="EnsemblBacteria" id="AAN23963">
    <property type="protein sequence ID" value="AAN23963"/>
    <property type="gene ID" value="BL0098"/>
</dbReference>
<dbReference type="KEGG" id="blo:BL0098"/>
<dbReference type="PATRIC" id="fig|206672.9.peg.105"/>
<dbReference type="HOGENOM" id="CLU_042258_0_0_11"/>
<dbReference type="OrthoDB" id="9803214at2"/>
<dbReference type="PhylomeDB" id="Q8G7Y6"/>
<dbReference type="UniPathway" id="UPA00056">
    <property type="reaction ID" value="UER00096"/>
</dbReference>
<dbReference type="Proteomes" id="UP000000439">
    <property type="component" value="Chromosome"/>
</dbReference>
<dbReference type="GO" id="GO:0051539">
    <property type="term" value="F:4 iron, 4 sulfur cluster binding"/>
    <property type="evidence" value="ECO:0007669"/>
    <property type="project" value="UniProtKB-UniRule"/>
</dbReference>
<dbReference type="GO" id="GO:0046429">
    <property type="term" value="F:4-hydroxy-3-methylbut-2-en-1-yl diphosphate synthase activity (ferredoxin)"/>
    <property type="evidence" value="ECO:0007669"/>
    <property type="project" value="UniProtKB-UniRule"/>
</dbReference>
<dbReference type="GO" id="GO:0141197">
    <property type="term" value="F:4-hydroxy-3-methylbut-2-enyl-diphosphate synthase activity (flavodoxin)"/>
    <property type="evidence" value="ECO:0007669"/>
    <property type="project" value="UniProtKB-EC"/>
</dbReference>
<dbReference type="GO" id="GO:0005506">
    <property type="term" value="F:iron ion binding"/>
    <property type="evidence" value="ECO:0007669"/>
    <property type="project" value="InterPro"/>
</dbReference>
<dbReference type="GO" id="GO:0019288">
    <property type="term" value="P:isopentenyl diphosphate biosynthetic process, methylerythritol 4-phosphate pathway"/>
    <property type="evidence" value="ECO:0007669"/>
    <property type="project" value="UniProtKB-UniRule"/>
</dbReference>
<dbReference type="GO" id="GO:0016114">
    <property type="term" value="P:terpenoid biosynthetic process"/>
    <property type="evidence" value="ECO:0007669"/>
    <property type="project" value="InterPro"/>
</dbReference>
<dbReference type="FunFam" id="3.20.20.20:FF:000001">
    <property type="entry name" value="4-hydroxy-3-methylbut-2-en-1-yl diphosphate synthase (flavodoxin)"/>
    <property type="match status" value="1"/>
</dbReference>
<dbReference type="Gene3D" id="3.20.20.20">
    <property type="entry name" value="Dihydropteroate synthase-like"/>
    <property type="match status" value="1"/>
</dbReference>
<dbReference type="Gene3D" id="3.30.413.10">
    <property type="entry name" value="Sulfite Reductase Hemoprotein, domain 1"/>
    <property type="match status" value="1"/>
</dbReference>
<dbReference type="HAMAP" id="MF_00159">
    <property type="entry name" value="IspG"/>
    <property type="match status" value="1"/>
</dbReference>
<dbReference type="InterPro" id="IPR011005">
    <property type="entry name" value="Dihydropteroate_synth-like_sf"/>
</dbReference>
<dbReference type="InterPro" id="IPR016425">
    <property type="entry name" value="IspG_bac"/>
</dbReference>
<dbReference type="InterPro" id="IPR004588">
    <property type="entry name" value="IspG_bac-typ"/>
</dbReference>
<dbReference type="InterPro" id="IPR045854">
    <property type="entry name" value="NO2/SO3_Rdtase_4Fe4S_sf"/>
</dbReference>
<dbReference type="NCBIfam" id="TIGR00612">
    <property type="entry name" value="ispG_gcpE"/>
    <property type="match status" value="1"/>
</dbReference>
<dbReference type="NCBIfam" id="NF001540">
    <property type="entry name" value="PRK00366.1"/>
    <property type="match status" value="1"/>
</dbReference>
<dbReference type="PANTHER" id="PTHR30454">
    <property type="entry name" value="4-HYDROXY-3-METHYLBUT-2-EN-1-YL DIPHOSPHATE SYNTHASE"/>
    <property type="match status" value="1"/>
</dbReference>
<dbReference type="PANTHER" id="PTHR30454:SF0">
    <property type="entry name" value="4-HYDROXY-3-METHYLBUT-2-EN-1-YL DIPHOSPHATE SYNTHASE (FERREDOXIN), CHLOROPLASTIC"/>
    <property type="match status" value="1"/>
</dbReference>
<dbReference type="Pfam" id="PF04551">
    <property type="entry name" value="GcpE"/>
    <property type="match status" value="1"/>
</dbReference>
<dbReference type="PIRSF" id="PIRSF004640">
    <property type="entry name" value="IspG"/>
    <property type="match status" value="1"/>
</dbReference>
<dbReference type="SUPFAM" id="SSF51717">
    <property type="entry name" value="Dihydropteroate synthetase-like"/>
    <property type="match status" value="1"/>
</dbReference>
<dbReference type="SUPFAM" id="SSF56014">
    <property type="entry name" value="Nitrite and sulphite reductase 4Fe-4S domain-like"/>
    <property type="match status" value="1"/>
</dbReference>
<accession>Q8G7Y6</accession>
<protein>
    <recommendedName>
        <fullName evidence="1">4-hydroxy-3-methylbut-2-en-1-yl diphosphate synthase (flavodoxin)</fullName>
        <ecNumber evidence="1">1.17.7.3</ecNumber>
    </recommendedName>
    <alternativeName>
        <fullName evidence="1">1-hydroxy-2-methyl-2-(E)-butenyl 4-diphosphate synthase</fullName>
    </alternativeName>
</protein>
<organism>
    <name type="scientific">Bifidobacterium longum (strain NCC 2705)</name>
    <dbReference type="NCBI Taxonomy" id="206672"/>
    <lineage>
        <taxon>Bacteria</taxon>
        <taxon>Bacillati</taxon>
        <taxon>Actinomycetota</taxon>
        <taxon>Actinomycetes</taxon>
        <taxon>Bifidobacteriales</taxon>
        <taxon>Bifidobacteriaceae</taxon>
        <taxon>Bifidobacterium</taxon>
    </lineage>
</organism>
<sequence length="403" mass="42564">MNTENPIEKPFRKTGDPVDLTSESPLHPRRKSRRIMVGPVPVGGGAPISVQSMTNTLTANVPATLQQIAELTAAGCDIVRVAVPSQDDADALPEICRKSPIPVIADIHFQSKYVFQAIDAGCAAVRVNPGNIRKFDEVGPDICKAATDAGISLRIGVNAGSLDKELYAKYGGPTPEALVASALKEAHMFEDVGFHDFKISVKHHDVITMVETYRLLASKGDWPLHLGVTEAGPAWQGTIKSCLAFGALLAEGIGDTIRVSLSAPPAEEVKVGCKLLEYMGLRPRKFDIISCPSCGRAQVDVIQLASAVTEGLKDVTAPIRVAVMGCIVNGPGEAREADLGVASGNGKGQIFIKGKVIKTVPEDQIVDTLLTIANDIAAQMEADGQVPVNSTGPVVVPIQHPGH</sequence>
<evidence type="ECO:0000255" key="1">
    <source>
        <dbReference type="HAMAP-Rule" id="MF_00159"/>
    </source>
</evidence>
<evidence type="ECO:0000256" key="2">
    <source>
        <dbReference type="SAM" id="MobiDB-lite"/>
    </source>
</evidence>